<sequence>MVSIAFYGGIPGGISTPITQQSEKSKCEENTMFQPYCYNNDSKNSMAESKEARDQEMNLKEESKEEKRRNDWWKIGMFLLCLAGTTGGILWWYEGLPQQHYIGLVAIGGRLNGSGQSNAIECWGSFPGCRPFQNYFSYETNRSMHMDNNTATLLEAYHREITFIYKSSCTDSDHCQEYQCKKVNLNSSASSNSVRVEDVTNTAEYWGFKWLECNQTENFKTILVPENEMVNINDTDTWIPKGCNETWARVKRCPIDILYGIHPIRLCVQPPFFLVQEKGIADTSRIGNCGPTIFLGVLEDNKGVVRGDYTACNVRRLNINRKDYTGIYQVPIFYTCTFTNITSCNSKPIISVIMYETNQVQYLLCNNNNSNNYNCVVQSFGVIGQAHLELPRPNKRIRNQSFNQYNCSINNKTELETWKLVKTSGVTPLPISSEANTGLIRHKRDFGISAIVAAIVAATAIAASATMSYVALTEVNKIMEVQNHTFEVENSTLNGMDLIERQIKILYAMILQTHADVQLLKERQQVEETFNLIGCIERTHVFCHTGHPWNMSWGHLNESTQWDDWVSKMEDLNQEILTTLHGARNNLAQSMITFNTPDSIAQFGKDLWSHIGNWIPGLGASIIKYIVMFLLIYLLLTSSPKILRALWKVTSGAGSSGSRYLKKKFHHKHASREDTWDQAQHNIHLAGVTGGSGDKYYKQKYSRNDWNGESEEYNRRPKSWVKSIEAFGESYISEKTKGEISQPGAAINEHKNGSGGNNPHQGSLDLEIRSEGGNIYDCCIKAQEGTLAIPCCGFPLWLFWGLVIIVGRIAGYGLRGLAVIIRICIRGLNLIFEIIRKMLDYIGRALNPGTSHVSMPQYV</sequence>
<feature type="propeptide" id="PRO_0000239525" evidence="1">
    <location>
        <begin position="1"/>
        <end position="6"/>
    </location>
</feature>
<feature type="chain" id="PRO_0000038696" description="Envelope glycoprotein">
    <location>
        <begin position="7"/>
        <end position="859"/>
    </location>
</feature>
<feature type="chain" id="PRO_0000038697" description="Surface protein" evidence="1">
    <location>
        <begin position="7"/>
        <end position="444"/>
    </location>
</feature>
<feature type="chain" id="PRO_0000038698" description="Transmembrane protein" evidence="1">
    <location>
        <begin position="445"/>
        <end position="859"/>
    </location>
</feature>
<feature type="topological domain" description="Extracellular" evidence="2">
    <location>
        <begin position="7"/>
        <end position="614"/>
    </location>
</feature>
<feature type="transmembrane region" description="Helical" evidence="2">
    <location>
        <begin position="615"/>
        <end position="635"/>
    </location>
</feature>
<feature type="topological domain" description="Cytoplasmic" evidence="2">
    <location>
        <begin position="636"/>
        <end position="859"/>
    </location>
</feature>
<feature type="region of interest" description="Fusion peptide" evidence="2">
    <location>
        <begin position="446"/>
        <end position="466"/>
    </location>
</feature>
<feature type="region of interest" description="Immunosuppression" evidence="1">
    <location>
        <begin position="498"/>
        <end position="513"/>
    </location>
</feature>
<feature type="coiled-coil region" evidence="2">
    <location>
        <begin position="576"/>
        <end position="624"/>
    </location>
</feature>
<feature type="coiled-coil region" evidence="2">
    <location>
        <begin position="663"/>
        <end position="699"/>
    </location>
</feature>
<feature type="site" description="Cleavage; by host" evidence="1">
    <location>
        <begin position="444"/>
        <end position="445"/>
    </location>
</feature>
<feature type="site" description="Cleavage" evidence="1">
    <location>
        <begin position="684"/>
        <end position="685"/>
    </location>
</feature>
<feature type="glycosylation site" description="N-linked (GlcNAc...) asparagine; by host" evidence="2">
    <location>
        <position position="40"/>
    </location>
</feature>
<feature type="glycosylation site" description="N-linked (GlcNAc...) asparagine; by host" evidence="2">
    <location>
        <position position="112"/>
    </location>
</feature>
<feature type="glycosylation site" description="N-linked (GlcNAc...) asparagine; by host" evidence="2">
    <location>
        <position position="141"/>
    </location>
</feature>
<feature type="glycosylation site" description="N-linked (GlcNAc...) asparagine; by host" evidence="2">
    <location>
        <position position="148"/>
    </location>
</feature>
<feature type="glycosylation site" description="N-linked (GlcNAc...) asparagine; by host" evidence="2">
    <location>
        <position position="186"/>
    </location>
</feature>
<feature type="glycosylation site" description="N-linked (GlcNAc...) asparagine; by host" evidence="2">
    <location>
        <position position="214"/>
    </location>
</feature>
<feature type="glycosylation site" description="N-linked (GlcNAc...) asparagine; by host" evidence="2">
    <location>
        <position position="233"/>
    </location>
</feature>
<feature type="glycosylation site" description="N-linked (GlcNAc...) asparagine; by host" evidence="2">
    <location>
        <position position="244"/>
    </location>
</feature>
<feature type="glycosylation site" description="N-linked (GlcNAc...) asparagine; by host" evidence="2">
    <location>
        <position position="340"/>
    </location>
</feature>
<feature type="glycosylation site" description="N-linked (GlcNAc...) asparagine; by host" evidence="2">
    <location>
        <position position="368"/>
    </location>
</feature>
<feature type="glycosylation site" description="N-linked (GlcNAc...) asparagine; by host" evidence="2">
    <location>
        <position position="399"/>
    </location>
</feature>
<feature type="glycosylation site" description="N-linked (GlcNAc...) asparagine; by host" evidence="2">
    <location>
        <position position="406"/>
    </location>
</feature>
<feature type="glycosylation site" description="N-linked (GlcNAc...) asparagine; by host" evidence="2">
    <location>
        <position position="411"/>
    </location>
</feature>
<feature type="glycosylation site" description="N-linked (GlcNAc...) asparagine; by host" evidence="2">
    <location>
        <position position="483"/>
    </location>
</feature>
<feature type="glycosylation site" description="N-linked (GlcNAc...) asparagine; by host" evidence="2">
    <location>
        <position position="490"/>
    </location>
</feature>
<feature type="glycosylation site" description="N-linked (GlcNAc...) asparagine; by host" evidence="2">
    <location>
        <position position="550"/>
    </location>
</feature>
<feature type="glycosylation site" description="N-linked (GlcNAc...) asparagine; by host" evidence="2">
    <location>
        <position position="557"/>
    </location>
</feature>
<reference key="1">
    <citation type="journal article" date="1986" name="Virology">
        <title>Lentivirus genomic organization: the complete nucleotide sequence of the env gene region of equine infectious anemia virus.</title>
        <authorList>
            <person name="Rushlow K."/>
            <person name="Olsen K."/>
            <person name="Stiegler G."/>
            <person name="Payne S.L."/>
            <person name="Montelaro R.C."/>
            <person name="Issel C.J."/>
        </authorList>
    </citation>
    <scope>NUCLEOTIDE SEQUENCE [GENOMIC RNA]</scope>
</reference>
<keyword id="KW-0165">Cleavage on pair of basic residues</keyword>
<keyword id="KW-0175">Coiled coil</keyword>
<keyword id="KW-1015">Disulfide bond</keyword>
<keyword id="KW-0325">Glycoprotein</keyword>
<keyword id="KW-1032">Host cell membrane</keyword>
<keyword id="KW-1043">Host membrane</keyword>
<keyword id="KW-0945">Host-virus interaction</keyword>
<keyword id="KW-0472">Membrane</keyword>
<keyword id="KW-0812">Transmembrane</keyword>
<keyword id="KW-1133">Transmembrane helix</keyword>
<keyword id="KW-1161">Viral attachment to host cell</keyword>
<keyword id="KW-0261">Viral envelope protein</keyword>
<keyword id="KW-0946">Virion</keyword>
<keyword id="KW-1160">Virus entry into host cell</keyword>
<organismHost>
    <name type="scientific">Equus asinus</name>
    <name type="common">Donkey</name>
    <name type="synonym">Equus africanus asinus</name>
    <dbReference type="NCBI Taxonomy" id="9793"/>
</organismHost>
<organismHost>
    <name type="scientific">Equus caballus</name>
    <name type="common">Horse</name>
    <dbReference type="NCBI Taxonomy" id="9796"/>
</organismHost>
<comment type="function">
    <text evidence="1">The surface protein (SU) attaches the virus to the host cell by binding to its receptor. This interaction triggers the refolding of the transmembrane protein (TM) and is thought to activate its fusogenic potential by unmasking its fusion peptide. Fusion occurs at the host cell plasma membrane (By similarity).</text>
</comment>
<comment type="function">
    <text evidence="1">The transmembrane protein (TM) acts as a class I viral fusion protein. Under the current model, the protein has at least 3 conformational states: pre-fusion native state, pre-hairpin intermediate state, and post-fusion hairpin state. During viral and target cell membrane fusion, the coiled coil regions (heptad repeats) assume a trimer-of-hairpins structure, positioning the fusion peptide in close proximity to the C-terminal region of the ectodomain. The formation of this structure appears to drive apposition and subsequent fusion of viral and target cell membranes. Membranes fusion leads to delivery of the nucleocapsid into the cytoplasm (By similarity).</text>
</comment>
<comment type="subunit">
    <text evidence="1">The mature envelope protein (Env) consists of a trimer of SU-TM heterodimers attached by noncovalent interactions or by a labile interchain disulfide bond.</text>
</comment>
<comment type="subcellular location">
    <molecule>Transmembrane protein</molecule>
    <subcellularLocation>
        <location evidence="1">Virion membrane</location>
        <topology evidence="1">Single-pass type I membrane protein</topology>
    </subcellularLocation>
    <subcellularLocation>
        <location evidence="1">Host cell membrane</location>
        <topology evidence="1">Single-pass type I membrane protein</topology>
    </subcellularLocation>
    <text evidence="1">It is probably concentrated at the site of budding and incorporated into the virions possibly by contacts between the cytoplasmic tail of Env and the N-terminus of Gag.</text>
</comment>
<comment type="subcellular location">
    <molecule>Surface protein</molecule>
    <subcellularLocation>
        <location evidence="1">Virion membrane</location>
        <topology evidence="1">Peripheral membrane protein</topology>
    </subcellularLocation>
    <subcellularLocation>
        <location evidence="1">Host cell membrane</location>
        <topology evidence="1">Peripheral membrane protein</topology>
    </subcellularLocation>
    <text evidence="1">The surface protein is not anchored to the viral envelope, but associates with the extravirion surface through its binding to TM. It is probably concentrated at the site of budding and incorporated into the virions possibly by contacts between the cytoplasmic tail of Env and the N-terminus of Gag (By similarity).</text>
</comment>
<comment type="PTM">
    <text evidence="1">Specific enzymatic cleavages in vivo yield mature proteins. Envelope glycoproteins are synthesized as an inactive precursor that is N-glycosylated and processed likely by host cell furin or by a furin-like protease in the Golgi to yield the mature SU and TM proteins. The cleavage site between SU and TM requires the minimal sequence [KR]-X-[KR]-R (By similarity).</text>
</comment>
<comment type="caution">
    <text evidence="3">The original EMBL accession numbers (M11337 and M14855) assigned to this isolate (isolate Wyoming) have been made secondary to M16575 which is from a different isolate (clone 1365).</text>
</comment>
<accession>P06751</accession>
<proteinExistence type="inferred from homology"/>
<dbReference type="PIR" id="A25610">
    <property type="entry name" value="VCLJEV"/>
</dbReference>
<dbReference type="GlyCosmos" id="P06751">
    <property type="glycosylation" value="17 sites, No reported glycans"/>
</dbReference>
<dbReference type="GO" id="GO:0020002">
    <property type="term" value="C:host cell plasma membrane"/>
    <property type="evidence" value="ECO:0007669"/>
    <property type="project" value="UniProtKB-SubCell"/>
</dbReference>
<dbReference type="GO" id="GO:0016020">
    <property type="term" value="C:membrane"/>
    <property type="evidence" value="ECO:0007669"/>
    <property type="project" value="UniProtKB-KW"/>
</dbReference>
<dbReference type="GO" id="GO:0019031">
    <property type="term" value="C:viral envelope"/>
    <property type="evidence" value="ECO:0007669"/>
    <property type="project" value="UniProtKB-KW"/>
</dbReference>
<dbReference type="GO" id="GO:0055036">
    <property type="term" value="C:virion membrane"/>
    <property type="evidence" value="ECO:0007669"/>
    <property type="project" value="UniProtKB-SubCell"/>
</dbReference>
<dbReference type="GO" id="GO:0005198">
    <property type="term" value="F:structural molecule activity"/>
    <property type="evidence" value="ECO:0007669"/>
    <property type="project" value="InterPro"/>
</dbReference>
<dbReference type="GO" id="GO:0046718">
    <property type="term" value="P:symbiont entry into host cell"/>
    <property type="evidence" value="ECO:0007669"/>
    <property type="project" value="UniProtKB-KW"/>
</dbReference>
<dbReference type="GO" id="GO:0019062">
    <property type="term" value="P:virion attachment to host cell"/>
    <property type="evidence" value="ECO:0007669"/>
    <property type="project" value="UniProtKB-KW"/>
</dbReference>
<dbReference type="CDD" id="cd09909">
    <property type="entry name" value="HIV-1-like_HR1-HR2"/>
    <property type="match status" value="1"/>
</dbReference>
<dbReference type="InterPro" id="IPR000328">
    <property type="entry name" value="GP41-like"/>
</dbReference>
<dbReference type="InterPro" id="IPR001361">
    <property type="entry name" value="Gp90_EIAV"/>
</dbReference>
<dbReference type="Pfam" id="PF00971">
    <property type="entry name" value="EIAV_GP90"/>
    <property type="match status" value="1"/>
</dbReference>
<dbReference type="Pfam" id="PF00517">
    <property type="entry name" value="GP41"/>
    <property type="match status" value="1"/>
</dbReference>
<organism>
    <name type="scientific">Equine infectious anemia virus (strain Wyoming)</name>
    <name type="common">EIAV</name>
    <dbReference type="NCBI Taxonomy" id="11672"/>
    <lineage>
        <taxon>Viruses</taxon>
        <taxon>Riboviria</taxon>
        <taxon>Pararnavirae</taxon>
        <taxon>Artverviricota</taxon>
        <taxon>Revtraviricetes</taxon>
        <taxon>Ortervirales</taxon>
        <taxon>Retroviridae</taxon>
        <taxon>Orthoretrovirinae</taxon>
        <taxon>Lentivirus</taxon>
        <taxon>Equine infectious anemia virus</taxon>
    </lineage>
</organism>
<gene>
    <name type="primary">env</name>
</gene>
<evidence type="ECO:0000250" key="1"/>
<evidence type="ECO:0000255" key="2"/>
<evidence type="ECO:0000305" key="3"/>
<name>ENV_EIAVY</name>
<protein>
    <recommendedName>
        <fullName>Envelope glycoprotein</fullName>
    </recommendedName>
    <alternativeName>
        <fullName>Env polyprotein</fullName>
    </alternativeName>
    <component>
        <recommendedName>
            <fullName>Surface protein</fullName>
            <shortName>SU</shortName>
        </recommendedName>
        <alternativeName>
            <fullName>Glycoprotein 90</fullName>
            <shortName>gp90</shortName>
        </alternativeName>
    </component>
    <component>
        <recommendedName>
            <fullName>Transmembrane protein</fullName>
            <shortName>TM</shortName>
        </recommendedName>
        <alternativeName>
            <fullName>Glycoprotein 45</fullName>
            <shortName>gp45</shortName>
        </alternativeName>
    </component>
</protein>